<comment type="function">
    <text evidence="2">With S4 and S5 plays an important role in translational accuracy.</text>
</comment>
<comment type="function">
    <text evidence="2">Interacts with and stabilizes bases of the 16S rRNA that are involved in tRNA selection in the A site and with the mRNA backbone. Located at the interface of the 30S and 50S subunits, it traverses the body of the 30S subunit contacting proteins on the other side and probably holding the rRNA structure together. The combined cluster of proteins S8, S12 and S17 appears to hold together the shoulder and platform of the 30S subunit.</text>
</comment>
<comment type="subunit">
    <text evidence="2">Part of the 30S ribosomal subunit. Contacts proteins S8 and S17. May interact with IF1 in the 30S initiation complex.</text>
</comment>
<comment type="similarity">
    <text evidence="2">Belongs to the universal ribosomal protein uS12 family.</text>
</comment>
<gene>
    <name evidence="2" type="primary">rpsL</name>
    <name type="ordered locus">BVU_0809</name>
</gene>
<proteinExistence type="inferred from homology"/>
<keyword id="KW-0488">Methylation</keyword>
<keyword id="KW-0687">Ribonucleoprotein</keyword>
<keyword id="KW-0689">Ribosomal protein</keyword>
<keyword id="KW-0694">RNA-binding</keyword>
<keyword id="KW-0699">rRNA-binding</keyword>
<keyword id="KW-0820">tRNA-binding</keyword>
<accession>A6KYJ9</accession>
<organism>
    <name type="scientific">Phocaeicola vulgatus (strain ATCC 8482 / DSM 1447 / JCM 5826 / CCUG 4940 / NBRC 14291 / NCTC 11154)</name>
    <name type="common">Bacteroides vulgatus</name>
    <dbReference type="NCBI Taxonomy" id="435590"/>
    <lineage>
        <taxon>Bacteria</taxon>
        <taxon>Pseudomonadati</taxon>
        <taxon>Bacteroidota</taxon>
        <taxon>Bacteroidia</taxon>
        <taxon>Bacteroidales</taxon>
        <taxon>Bacteroidaceae</taxon>
        <taxon>Phocaeicola</taxon>
    </lineage>
</organism>
<dbReference type="EMBL" id="CP000139">
    <property type="protein sequence ID" value="ABR38513.1"/>
    <property type="molecule type" value="Genomic_DNA"/>
</dbReference>
<dbReference type="RefSeq" id="WP_005844840.1">
    <property type="nucleotide sequence ID" value="NZ_JANSWM010000035.1"/>
</dbReference>
<dbReference type="SMR" id="A6KYJ9"/>
<dbReference type="STRING" id="435590.BVU_0809"/>
<dbReference type="PaxDb" id="435590-BVU_0809"/>
<dbReference type="GeneID" id="93449027"/>
<dbReference type="KEGG" id="bvu:BVU_0809"/>
<dbReference type="eggNOG" id="COG0048">
    <property type="taxonomic scope" value="Bacteria"/>
</dbReference>
<dbReference type="HOGENOM" id="CLU_104295_1_2_10"/>
<dbReference type="BioCyc" id="BVUL435590:G1G59-851-MONOMER"/>
<dbReference type="Proteomes" id="UP000002861">
    <property type="component" value="Chromosome"/>
</dbReference>
<dbReference type="GO" id="GO:0015935">
    <property type="term" value="C:small ribosomal subunit"/>
    <property type="evidence" value="ECO:0007669"/>
    <property type="project" value="InterPro"/>
</dbReference>
<dbReference type="GO" id="GO:0019843">
    <property type="term" value="F:rRNA binding"/>
    <property type="evidence" value="ECO:0007669"/>
    <property type="project" value="UniProtKB-UniRule"/>
</dbReference>
<dbReference type="GO" id="GO:0003735">
    <property type="term" value="F:structural constituent of ribosome"/>
    <property type="evidence" value="ECO:0007669"/>
    <property type="project" value="InterPro"/>
</dbReference>
<dbReference type="GO" id="GO:0000049">
    <property type="term" value="F:tRNA binding"/>
    <property type="evidence" value="ECO:0007669"/>
    <property type="project" value="UniProtKB-UniRule"/>
</dbReference>
<dbReference type="GO" id="GO:0006412">
    <property type="term" value="P:translation"/>
    <property type="evidence" value="ECO:0007669"/>
    <property type="project" value="UniProtKB-UniRule"/>
</dbReference>
<dbReference type="CDD" id="cd03368">
    <property type="entry name" value="Ribosomal_S12"/>
    <property type="match status" value="1"/>
</dbReference>
<dbReference type="FunFam" id="2.40.50.140:FF:000001">
    <property type="entry name" value="30S ribosomal protein S12"/>
    <property type="match status" value="1"/>
</dbReference>
<dbReference type="Gene3D" id="2.40.50.140">
    <property type="entry name" value="Nucleic acid-binding proteins"/>
    <property type="match status" value="1"/>
</dbReference>
<dbReference type="HAMAP" id="MF_00403_B">
    <property type="entry name" value="Ribosomal_uS12_B"/>
    <property type="match status" value="1"/>
</dbReference>
<dbReference type="InterPro" id="IPR012340">
    <property type="entry name" value="NA-bd_OB-fold"/>
</dbReference>
<dbReference type="InterPro" id="IPR006032">
    <property type="entry name" value="Ribosomal_uS12"/>
</dbReference>
<dbReference type="InterPro" id="IPR005679">
    <property type="entry name" value="Ribosomal_uS12_bac"/>
</dbReference>
<dbReference type="NCBIfam" id="TIGR00981">
    <property type="entry name" value="rpsL_bact"/>
    <property type="match status" value="1"/>
</dbReference>
<dbReference type="PANTHER" id="PTHR11652">
    <property type="entry name" value="30S RIBOSOMAL PROTEIN S12 FAMILY MEMBER"/>
    <property type="match status" value="1"/>
</dbReference>
<dbReference type="Pfam" id="PF00164">
    <property type="entry name" value="Ribosom_S12_S23"/>
    <property type="match status" value="1"/>
</dbReference>
<dbReference type="PIRSF" id="PIRSF002133">
    <property type="entry name" value="Ribosomal_S12/S23"/>
    <property type="match status" value="1"/>
</dbReference>
<dbReference type="PRINTS" id="PR01034">
    <property type="entry name" value="RIBOSOMALS12"/>
</dbReference>
<dbReference type="SUPFAM" id="SSF50249">
    <property type="entry name" value="Nucleic acid-binding proteins"/>
    <property type="match status" value="1"/>
</dbReference>
<dbReference type="PROSITE" id="PS00055">
    <property type="entry name" value="RIBOSOMAL_S12"/>
    <property type="match status" value="1"/>
</dbReference>
<protein>
    <recommendedName>
        <fullName evidence="2">Small ribosomal subunit protein uS12</fullName>
    </recommendedName>
    <alternativeName>
        <fullName evidence="4">30S ribosomal protein S12</fullName>
    </alternativeName>
</protein>
<feature type="chain" id="PRO_1000049770" description="Small ribosomal subunit protein uS12">
    <location>
        <begin position="1"/>
        <end position="137"/>
    </location>
</feature>
<feature type="region of interest" description="Disordered" evidence="3">
    <location>
        <begin position="105"/>
        <end position="137"/>
    </location>
</feature>
<feature type="compositionally biased region" description="Basic residues" evidence="3">
    <location>
        <begin position="111"/>
        <end position="123"/>
    </location>
</feature>
<feature type="compositionally biased region" description="Low complexity" evidence="3">
    <location>
        <begin position="124"/>
        <end position="137"/>
    </location>
</feature>
<feature type="modified residue" description="3-methylthioaspartic acid" evidence="1">
    <location>
        <position position="89"/>
    </location>
</feature>
<reference key="1">
    <citation type="journal article" date="2007" name="PLoS Biol.">
        <title>Evolution of symbiotic bacteria in the distal human intestine.</title>
        <authorList>
            <person name="Xu J."/>
            <person name="Mahowald M.A."/>
            <person name="Ley R.E."/>
            <person name="Lozupone C.A."/>
            <person name="Hamady M."/>
            <person name="Martens E.C."/>
            <person name="Henrissat B."/>
            <person name="Coutinho P.M."/>
            <person name="Minx P."/>
            <person name="Latreille P."/>
            <person name="Cordum H."/>
            <person name="Van Brunt A."/>
            <person name="Kim K."/>
            <person name="Fulton R.S."/>
            <person name="Fulton L.A."/>
            <person name="Clifton S.W."/>
            <person name="Wilson R.K."/>
            <person name="Knight R.D."/>
            <person name="Gordon J.I."/>
        </authorList>
    </citation>
    <scope>NUCLEOTIDE SEQUENCE [LARGE SCALE GENOMIC DNA]</scope>
    <source>
        <strain>ATCC 8482 / DSM 1447 / JCM 5826 / CCUG 4940 / NBRC 14291 / NCTC 11154</strain>
    </source>
</reference>
<name>RS12_PHOV8</name>
<evidence type="ECO:0000250" key="1"/>
<evidence type="ECO:0000255" key="2">
    <source>
        <dbReference type="HAMAP-Rule" id="MF_00403"/>
    </source>
</evidence>
<evidence type="ECO:0000256" key="3">
    <source>
        <dbReference type="SAM" id="MobiDB-lite"/>
    </source>
</evidence>
<evidence type="ECO:0000305" key="4"/>
<sequence length="137" mass="14993">MPTIQQLVRKGREVLVEKSKSPALDSCPQRRGVCVRVYTTTPKKPNSAMRKVARVRLTNSKEVNSYIPGEGHNLQEHSIVLVRGGRVKDLPGVRYHIVRGTLDTAGVAGRTQRRSKYGAKRPKAGQAAAPAKGKGKK</sequence>